<sequence length="268" mass="29674">MGDEKPVIVMANRERDRELLIPVADSGDKDDGSSSKPSSSSSASSSSHQSSHETLSLFIRGWASKKFMTGCVILLPIAITFYITWWFIHFVDGFFSPIYAQLGINVFGFGFLTSIAFIFLVGVFMSSWLGASVLNLGEWFIKRMPFVRHIYNASKQISTAISPDQNTQAFKEVAIIRHPRVGEYAFGFITSTVVLQNYPTEEELCCVYVPTNHLYIGDILLVNSNDVIRPNLSVREGIEIVVSGGMSMPQILSTVDKPLASIDRATSL</sequence>
<name>COV1_ARATH</name>
<protein>
    <recommendedName>
        <fullName evidence="4">Protein CONTINUOUS VASCULAR RING 1</fullName>
    </recommendedName>
</protein>
<accession>F4IUE7</accession>
<accession>A0A1P8AZ44</accession>
<accession>Q0WL91</accession>
<accession>Q94EH1</accession>
<accession>Q9SL69</accession>
<organism evidence="8">
    <name type="scientific">Arabidopsis thaliana</name>
    <name type="common">Mouse-ear cress</name>
    <dbReference type="NCBI Taxonomy" id="3702"/>
    <lineage>
        <taxon>Eukaryota</taxon>
        <taxon>Viridiplantae</taxon>
        <taxon>Streptophyta</taxon>
        <taxon>Embryophyta</taxon>
        <taxon>Tracheophyta</taxon>
        <taxon>Spermatophyta</taxon>
        <taxon>Magnoliopsida</taxon>
        <taxon>eudicotyledons</taxon>
        <taxon>Gunneridae</taxon>
        <taxon>Pentapetalae</taxon>
        <taxon>rosids</taxon>
        <taxon>malvids</taxon>
        <taxon>Brassicales</taxon>
        <taxon>Brassicaceae</taxon>
        <taxon>Camelineae</taxon>
        <taxon>Arabidopsis</taxon>
    </lineage>
</organism>
<feature type="chain" id="PRO_0000431898" description="Protein CONTINUOUS VASCULAR RING 1">
    <location>
        <begin position="1"/>
        <end position="268"/>
    </location>
</feature>
<feature type="topological domain" description="Cytoplasmic" evidence="5">
    <location>
        <begin position="1"/>
        <end position="70"/>
    </location>
</feature>
<feature type="transmembrane region" description="Helical; Name=1" evidence="1">
    <location>
        <begin position="71"/>
        <end position="91"/>
    </location>
</feature>
<feature type="topological domain" description="Extracellular" evidence="5">
    <location>
        <begin position="92"/>
        <end position="103"/>
    </location>
</feature>
<feature type="transmembrane region" description="Helical; Name=2" evidence="1">
    <location>
        <begin position="104"/>
        <end position="124"/>
    </location>
</feature>
<feature type="topological domain" description="Cytoplasmic" evidence="5">
    <location>
        <begin position="125"/>
        <end position="268"/>
    </location>
</feature>
<feature type="region of interest" description="Disordered" evidence="2">
    <location>
        <begin position="21"/>
        <end position="48"/>
    </location>
</feature>
<feature type="compositionally biased region" description="Low complexity" evidence="2">
    <location>
        <begin position="34"/>
        <end position="48"/>
    </location>
</feature>
<feature type="mutagenesis site" description="In cov1-1; stunted plants. Dramatic increase in vascular tissue development in the stem in place of the interfascicular region that normally separates the vascular bundles, thus leading to an almost continuous ring of both phloem and xylem tissue around the whole stem, but relatively normal vascular patterning in leaves and cotyledons." evidence="3">
    <original>P</original>
    <variation>S</variation>
    <location>
        <position position="76"/>
    </location>
</feature>
<feature type="mutagenesis site" description="In cov1-2; dramatic increase in vascular tissue development in the stem in place of the interfascicular region that normally separates the vascular bundles, thus leading to an almost continuous ring of both phloem and xylem tissue around the whole stem, but relatively normal vascular patterning in leaves and cotyledons." evidence="3">
    <original>G</original>
    <variation>R</variation>
    <location>
        <position position="130"/>
    </location>
</feature>
<feature type="sequence conflict" description="In Ref. 4; AAK95310/AAM10356." evidence="5" ref="4">
    <original>H</original>
    <variation>R</variation>
    <location>
        <position position="213"/>
    </location>
</feature>
<feature type="sequence conflict" description="In Ref. 3; AEC06968/ANM61944." evidence="5" ref="3">
    <original>I</original>
    <variation>L</variation>
    <location>
        <position position="219"/>
    </location>
</feature>
<proteinExistence type="evidence at protein level"/>
<keyword id="KW-0217">Developmental protein</keyword>
<keyword id="KW-0472">Membrane</keyword>
<keyword id="KW-1185">Reference proteome</keyword>
<keyword id="KW-0812">Transmembrane</keyword>
<keyword id="KW-1133">Transmembrane helix</keyword>
<evidence type="ECO:0000255" key="1"/>
<evidence type="ECO:0000256" key="2">
    <source>
        <dbReference type="SAM" id="MobiDB-lite"/>
    </source>
</evidence>
<evidence type="ECO:0000269" key="3">
    <source>
    </source>
</evidence>
<evidence type="ECO:0000303" key="4">
    <source>
    </source>
</evidence>
<evidence type="ECO:0000305" key="5"/>
<evidence type="ECO:0000312" key="6">
    <source>
        <dbReference type="Araport" id="AT2G20120"/>
    </source>
</evidence>
<evidence type="ECO:0000312" key="7">
    <source>
        <dbReference type="EMBL" id="AAD24385.1"/>
    </source>
</evidence>
<evidence type="ECO:0000312" key="8">
    <source>
        <dbReference type="Proteomes" id="UP000006548"/>
    </source>
</evidence>
<reference key="1">
    <citation type="journal article" date="2003" name="Development">
        <title>Isolation of COV1, a gene involved in the regulation of vascular patterning in the stem of Arabidopsis.</title>
        <authorList>
            <person name="Parker G."/>
            <person name="Schofield R."/>
            <person name="Sundberg B."/>
            <person name="Turner S."/>
        </authorList>
    </citation>
    <scope>NUCLEOTIDE SEQUENCE [MRNA]</scope>
    <scope>FUNCTION</scope>
    <scope>MUTAGENESIS OF PRO-76 AND GLY-130</scope>
    <scope>TISSUE SPECIFICITY</scope>
    <scope>GENE FAMILY</scope>
    <scope>NOMENCLATURE</scope>
    <source>
        <strain>cv. Columbia</strain>
        <strain>cv. Landsberg erecta</strain>
    </source>
</reference>
<reference key="2">
    <citation type="journal article" date="1999" name="Nature">
        <title>Sequence and analysis of chromosome 2 of the plant Arabidopsis thaliana.</title>
        <authorList>
            <person name="Lin X."/>
            <person name="Kaul S."/>
            <person name="Rounsley S.D."/>
            <person name="Shea T.P."/>
            <person name="Benito M.-I."/>
            <person name="Town C.D."/>
            <person name="Fujii C.Y."/>
            <person name="Mason T.M."/>
            <person name="Bowman C.L."/>
            <person name="Barnstead M.E."/>
            <person name="Feldblyum T.V."/>
            <person name="Buell C.R."/>
            <person name="Ketchum K.A."/>
            <person name="Lee J.J."/>
            <person name="Ronning C.M."/>
            <person name="Koo H.L."/>
            <person name="Moffat K.S."/>
            <person name="Cronin L.A."/>
            <person name="Shen M."/>
            <person name="Pai G."/>
            <person name="Van Aken S."/>
            <person name="Umayam L."/>
            <person name="Tallon L.J."/>
            <person name="Gill J.E."/>
            <person name="Adams M.D."/>
            <person name="Carrera A.J."/>
            <person name="Creasy T.H."/>
            <person name="Goodman H.M."/>
            <person name="Somerville C.R."/>
            <person name="Copenhaver G.P."/>
            <person name="Preuss D."/>
            <person name="Nierman W.C."/>
            <person name="White O."/>
            <person name="Eisen J.A."/>
            <person name="Salzberg S.L."/>
            <person name="Fraser C.M."/>
            <person name="Venter J.C."/>
        </authorList>
    </citation>
    <scope>NUCLEOTIDE SEQUENCE [LARGE SCALE GENOMIC DNA]</scope>
    <source>
        <strain>cv. Columbia</strain>
    </source>
</reference>
<reference key="3">
    <citation type="journal article" date="2017" name="Plant J.">
        <title>Araport11: a complete reannotation of the Arabidopsis thaliana reference genome.</title>
        <authorList>
            <person name="Cheng C.Y."/>
            <person name="Krishnakumar V."/>
            <person name="Chan A.P."/>
            <person name="Thibaud-Nissen F."/>
            <person name="Schobel S."/>
            <person name="Town C.D."/>
        </authorList>
    </citation>
    <scope>GENOME REANNOTATION</scope>
    <scope>SEQUENCE REVISION</scope>
    <source>
        <strain>cv. Columbia</strain>
    </source>
</reference>
<reference key="4">
    <citation type="journal article" date="2003" name="Science">
        <title>Empirical analysis of transcriptional activity in the Arabidopsis genome.</title>
        <authorList>
            <person name="Yamada K."/>
            <person name="Lim J."/>
            <person name="Dale J.M."/>
            <person name="Chen H."/>
            <person name="Shinn P."/>
            <person name="Palm C.J."/>
            <person name="Southwick A.M."/>
            <person name="Wu H.C."/>
            <person name="Kim C.J."/>
            <person name="Nguyen M."/>
            <person name="Pham P.K."/>
            <person name="Cheuk R.F."/>
            <person name="Karlin-Newmann G."/>
            <person name="Liu S.X."/>
            <person name="Lam B."/>
            <person name="Sakano H."/>
            <person name="Wu T."/>
            <person name="Yu G."/>
            <person name="Miranda M."/>
            <person name="Quach H.L."/>
            <person name="Tripp M."/>
            <person name="Chang C.H."/>
            <person name="Lee J.M."/>
            <person name="Toriumi M.J."/>
            <person name="Chan M.M."/>
            <person name="Tang C.C."/>
            <person name="Onodera C.S."/>
            <person name="Deng J.M."/>
            <person name="Akiyama K."/>
            <person name="Ansari Y."/>
            <person name="Arakawa T."/>
            <person name="Banh J."/>
            <person name="Banno F."/>
            <person name="Bowser L."/>
            <person name="Brooks S.Y."/>
            <person name="Carninci P."/>
            <person name="Chao Q."/>
            <person name="Choy N."/>
            <person name="Enju A."/>
            <person name="Goldsmith A.D."/>
            <person name="Gurjal M."/>
            <person name="Hansen N.F."/>
            <person name="Hayashizaki Y."/>
            <person name="Johnson-Hopson C."/>
            <person name="Hsuan V.W."/>
            <person name="Iida K."/>
            <person name="Karnes M."/>
            <person name="Khan S."/>
            <person name="Koesema E."/>
            <person name="Ishida J."/>
            <person name="Jiang P.X."/>
            <person name="Jones T."/>
            <person name="Kawai J."/>
            <person name="Kamiya A."/>
            <person name="Meyers C."/>
            <person name="Nakajima M."/>
            <person name="Narusaka M."/>
            <person name="Seki M."/>
            <person name="Sakurai T."/>
            <person name="Satou M."/>
            <person name="Tamse R."/>
            <person name="Vaysberg M."/>
            <person name="Wallender E.K."/>
            <person name="Wong C."/>
            <person name="Yamamura Y."/>
            <person name="Yuan S."/>
            <person name="Shinozaki K."/>
            <person name="Davis R.W."/>
            <person name="Theologis A."/>
            <person name="Ecker J.R."/>
        </authorList>
    </citation>
    <scope>NUCLEOTIDE SEQUENCE [LARGE SCALE MRNA]</scope>
    <source>
        <strain>cv. Columbia</strain>
    </source>
</reference>
<reference key="5">
    <citation type="submission" date="2006-07" db="EMBL/GenBank/DDBJ databases">
        <title>Large-scale analysis of RIKEN Arabidopsis full-length (RAFL) cDNAs.</title>
        <authorList>
            <person name="Totoki Y."/>
            <person name="Seki M."/>
            <person name="Ishida J."/>
            <person name="Nakajima M."/>
            <person name="Enju A."/>
            <person name="Kamiya A."/>
            <person name="Narusaka M."/>
            <person name="Shin-i T."/>
            <person name="Nakagawa M."/>
            <person name="Sakamoto N."/>
            <person name="Oishi K."/>
            <person name="Kohara Y."/>
            <person name="Kobayashi M."/>
            <person name="Toyoda A."/>
            <person name="Sakaki Y."/>
            <person name="Sakurai T."/>
            <person name="Iida K."/>
            <person name="Akiyama K."/>
            <person name="Satou M."/>
            <person name="Toyoda T."/>
            <person name="Konagaya A."/>
            <person name="Carninci P."/>
            <person name="Kawai J."/>
            <person name="Hayashizaki Y."/>
            <person name="Shinozaki K."/>
        </authorList>
    </citation>
    <scope>NUCLEOTIDE SEQUENCE [LARGE SCALE MRNA]</scope>
    <source>
        <strain>cv. Columbia</strain>
    </source>
</reference>
<reference key="6">
    <citation type="submission" date="2002-03" db="EMBL/GenBank/DDBJ databases">
        <title>Full-length cDNA from Arabidopsis thaliana.</title>
        <authorList>
            <person name="Brover V.V."/>
            <person name="Troukhan M.E."/>
            <person name="Alexandrov N.A."/>
            <person name="Lu Y.-P."/>
            <person name="Flavell R.B."/>
            <person name="Feldmann K.A."/>
        </authorList>
    </citation>
    <scope>NUCLEOTIDE SEQUENCE [LARGE SCALE MRNA]</scope>
</reference>
<dbReference type="EMBL" id="AY170845">
    <property type="protein sequence ID" value="AAO41858.1"/>
    <property type="molecule type" value="mRNA"/>
</dbReference>
<dbReference type="EMBL" id="AC006081">
    <property type="protein sequence ID" value="AAD24385.1"/>
    <property type="molecule type" value="Genomic_DNA"/>
</dbReference>
<dbReference type="EMBL" id="CP002685">
    <property type="protein sequence ID" value="AEC06968.1"/>
    <property type="molecule type" value="Genomic_DNA"/>
</dbReference>
<dbReference type="EMBL" id="CP002685">
    <property type="protein sequence ID" value="ANM61944.1"/>
    <property type="molecule type" value="Genomic_DNA"/>
</dbReference>
<dbReference type="EMBL" id="AF410324">
    <property type="protein sequence ID" value="AAK95310.1"/>
    <property type="molecule type" value="mRNA"/>
</dbReference>
<dbReference type="EMBL" id="AY093732">
    <property type="protein sequence ID" value="AAM10356.1"/>
    <property type="molecule type" value="mRNA"/>
</dbReference>
<dbReference type="EMBL" id="AK230315">
    <property type="protein sequence ID" value="BAF02116.1"/>
    <property type="status" value="ALT_INIT"/>
    <property type="molecule type" value="mRNA"/>
</dbReference>
<dbReference type="EMBL" id="AY084984">
    <property type="protein sequence ID" value="AAM61543.1"/>
    <property type="molecule type" value="mRNA"/>
</dbReference>
<dbReference type="PIR" id="C84585">
    <property type="entry name" value="C84585"/>
</dbReference>
<dbReference type="RefSeq" id="NP_001324133.1">
    <property type="nucleotide sequence ID" value="NM_001335662.1"/>
</dbReference>
<dbReference type="RefSeq" id="NP_565464.2">
    <property type="nucleotide sequence ID" value="NM_127570.5"/>
</dbReference>
<dbReference type="STRING" id="3702.F4IUE7"/>
<dbReference type="PaxDb" id="3702-AT2G20120.1"/>
<dbReference type="ProteomicsDB" id="241111"/>
<dbReference type="GeneID" id="816531"/>
<dbReference type="KEGG" id="ath:AT2G20120"/>
<dbReference type="Araport" id="AT2G20120"/>
<dbReference type="TAIR" id="AT2G20120"/>
<dbReference type="eggNOG" id="ENOG502QPUG">
    <property type="taxonomic scope" value="Eukaryota"/>
</dbReference>
<dbReference type="HOGENOM" id="CLU_068050_0_1_1"/>
<dbReference type="InParanoid" id="F4IUE7"/>
<dbReference type="OrthoDB" id="534431at2759"/>
<dbReference type="PhylomeDB" id="F4IUE7"/>
<dbReference type="PRO" id="PR:F4IUE7"/>
<dbReference type="Proteomes" id="UP000006548">
    <property type="component" value="Chromosome 2"/>
</dbReference>
<dbReference type="ExpressionAtlas" id="F4IUE7">
    <property type="expression patterns" value="baseline and differential"/>
</dbReference>
<dbReference type="GO" id="GO:0005794">
    <property type="term" value="C:Golgi apparatus"/>
    <property type="evidence" value="ECO:0007005"/>
    <property type="project" value="TAIR"/>
</dbReference>
<dbReference type="GO" id="GO:0016020">
    <property type="term" value="C:membrane"/>
    <property type="evidence" value="ECO:0007669"/>
    <property type="project" value="UniProtKB-SubCell"/>
</dbReference>
<dbReference type="GO" id="GO:0010222">
    <property type="term" value="P:stem vascular tissue pattern formation"/>
    <property type="evidence" value="ECO:0000315"/>
    <property type="project" value="TAIR"/>
</dbReference>
<dbReference type="InterPro" id="IPR007462">
    <property type="entry name" value="COV1-like"/>
</dbReference>
<dbReference type="PANTHER" id="PTHR31876">
    <property type="entry name" value="COV-LIKE PROTEIN 1"/>
    <property type="match status" value="1"/>
</dbReference>
<dbReference type="PANTHER" id="PTHR31876:SF19">
    <property type="entry name" value="PROTEIN CONTINUOUS VASCULAR RING 1-RELATED"/>
    <property type="match status" value="1"/>
</dbReference>
<dbReference type="Pfam" id="PF04367">
    <property type="entry name" value="DUF502"/>
    <property type="match status" value="1"/>
</dbReference>
<comment type="function">
    <text evidence="3">Involved in the regulation of vascular patterning in the stem, probably by negatively regulating the differentiation of vascular tissue.</text>
</comment>
<comment type="subcellular location">
    <subcellularLocation>
        <location evidence="1">Membrane</location>
        <topology evidence="1">Multi-pass membrane protein</topology>
    </subcellularLocation>
</comment>
<comment type="tissue specificity">
    <text evidence="3">Mostly expressed in flowers and stems, and, to a lower extent, in roots and leaves.</text>
</comment>
<comment type="similarity">
    <text evidence="5">Belongs to the plant COV1 protein family.</text>
</comment>
<comment type="sequence caution" evidence="5">
    <conflict type="erroneous initiation">
        <sequence resource="EMBL-CDS" id="BAF02116"/>
    </conflict>
    <text>Extended N-terminus.</text>
</comment>
<gene>
    <name evidence="4" type="primary">COV1</name>
    <name evidence="6" type="ordered locus">At2g20120</name>
    <name evidence="7" type="ORF">T2G17.8</name>
</gene>